<comment type="function">
    <text evidence="1 5">Required for osteoclast and melanocyte maturation and function.</text>
</comment>
<comment type="subunit">
    <text evidence="5">Chloride channel 7 are heteromers of alpha (CLCN7) and beta (OSTM1) subunits.</text>
</comment>
<comment type="interaction">
    <interactant intactId="EBI-11037160">
        <id>Q86WC4</id>
    </interactant>
    <interactant intactId="EBI-4402346">
        <id>P51798</id>
        <label>CLCN7</label>
    </interactant>
    <organismsDiffer>false</organismsDiffer>
    <experiments>5</experiments>
</comment>
<comment type="subcellular location">
    <subcellularLocation>
        <location evidence="5">Lysosome membrane</location>
        <topology evidence="5">Single-pass type I membrane protein</topology>
    </subcellularLocation>
    <text>Requires CLCN7 to travel to lysosomes.</text>
</comment>
<comment type="PTM">
    <text evidence="1">Undergoes proteolytic cleavage in the luminal domain, the cleaved fragments might be linked by disulfide bonds with the remnant of the protein.</text>
</comment>
<comment type="PTM">
    <text>Highly N-glycosylated.</text>
</comment>
<comment type="disease" evidence="3 4">
    <disease id="DI-00889">
        <name>Osteopetrosis, autosomal recessive 5</name>
        <acronym>OPTB5</acronym>
        <description>A rare genetic disease characterized by abnormally dense bone, due to defective resorption of immature bone. Osteopetrosis occurs in two forms: a severe autosomal recessive form occurring in utero, infancy, or childhood, and a benign autosomal dominant form occurring in adolescence or adulthood. Recessive osteopetrosis commonly manifests in early infancy with macrocephaly, feeding difficulties, evolving blindness and deafness, bone marrow failure, severe anemia, and hepatosplenomegaly. Deafness and blindness are generally thought to represent effects of pressure on nerves. OPTB5 patients manifest primary central nervous system involvement in addition to the classical stigmata of severe bone sclerosis, growth failure, anemia, thrombocytopenia and visual impairment with optic atrophy.</description>
        <dbReference type="MIM" id="259720"/>
    </disease>
    <text>The disease is caused by variants affecting the gene represented in this entry.</text>
</comment>
<comment type="similarity">
    <text evidence="6">Belongs to the OSTM1 family.</text>
</comment>
<comment type="sequence caution" evidence="6">
    <conflict type="frameshift">
        <sequence resource="EMBL-CDS" id="AAD27000"/>
    </conflict>
</comment>
<organism>
    <name type="scientific">Homo sapiens</name>
    <name type="common">Human</name>
    <dbReference type="NCBI Taxonomy" id="9606"/>
    <lineage>
        <taxon>Eukaryota</taxon>
        <taxon>Metazoa</taxon>
        <taxon>Chordata</taxon>
        <taxon>Craniata</taxon>
        <taxon>Vertebrata</taxon>
        <taxon>Euteleostomi</taxon>
        <taxon>Mammalia</taxon>
        <taxon>Eutheria</taxon>
        <taxon>Euarchontoglires</taxon>
        <taxon>Primates</taxon>
        <taxon>Haplorrhini</taxon>
        <taxon>Catarrhini</taxon>
        <taxon>Hominidae</taxon>
        <taxon>Homo</taxon>
    </lineage>
</organism>
<feature type="signal peptide" evidence="2">
    <location>
        <begin position="1"/>
        <end position="31"/>
    </location>
</feature>
<feature type="chain" id="PRO_0000021963" description="Osteopetrosis-associated transmembrane protein 1">
    <location>
        <begin position="32"/>
        <end position="334"/>
    </location>
</feature>
<feature type="topological domain" description="Lumenal" evidence="2">
    <location>
        <begin position="32"/>
        <end position="284"/>
    </location>
</feature>
<feature type="transmembrane region" description="Helical" evidence="2">
    <location>
        <begin position="285"/>
        <end position="305"/>
    </location>
</feature>
<feature type="topological domain" description="Cytoplasmic" evidence="2">
    <location>
        <begin position="306"/>
        <end position="334"/>
    </location>
</feature>
<feature type="modified residue" description="Phosphoserine" evidence="7 8 10">
    <location>
        <position position="322"/>
    </location>
</feature>
<feature type="modified residue" description="Phosphoserine" evidence="7 8 10 11">
    <location>
        <position position="325"/>
    </location>
</feature>
<feature type="modified residue" description="Phosphoserine" evidence="7 9">
    <location>
        <position position="333"/>
    </location>
</feature>
<feature type="glycosylation site" description="N-linked (GlcNAc...) asparagine" evidence="2">
    <location>
        <position position="93"/>
    </location>
</feature>
<feature type="glycosylation site" description="N-linked (GlcNAc...) asparagine" evidence="2">
    <location>
        <position position="128"/>
    </location>
</feature>
<feature type="glycosylation site" description="N-linked (GlcNAc...) asparagine" evidence="2">
    <location>
        <position position="135"/>
    </location>
</feature>
<feature type="glycosylation site" description="N-linked (GlcNAc...) asparagine" evidence="2">
    <location>
        <position position="163"/>
    </location>
</feature>
<feature type="glycosylation site" description="N-linked (GlcNAc...) asparagine" evidence="2">
    <location>
        <position position="177"/>
    </location>
</feature>
<feature type="glycosylation site" description="N-linked (GlcNAc...) asparagine" evidence="2">
    <location>
        <position position="184"/>
    </location>
</feature>
<feature type="glycosylation site" description="N-linked (GlcNAc...) asparagine" evidence="2">
    <location>
        <position position="194"/>
    </location>
</feature>
<feature type="glycosylation site" description="N-linked (GlcNAc...) asparagine" evidence="2">
    <location>
        <position position="216"/>
    </location>
</feature>
<feature type="glycosylation site" description="N-linked (GlcNAc...) asparagine" evidence="2">
    <location>
        <position position="263"/>
    </location>
</feature>
<feature type="glycosylation site" description="N-linked (GlcNAc...) asparagine" evidence="2">
    <location>
        <position position="274"/>
    </location>
</feature>
<feature type="sequence variant" id="VAR_051257" description="In dbSNP:rs9480830.">
    <original>L</original>
    <variation>F</variation>
    <location>
        <position position="52"/>
    </location>
</feature>
<feature type="sequence conflict" description="In Ref. 3; BAC11351." evidence="6" ref="3">
    <original>L</original>
    <variation>P</variation>
    <location>
        <position position="87"/>
    </location>
</feature>
<feature type="strand" evidence="12">
    <location>
        <begin position="77"/>
        <end position="79"/>
    </location>
</feature>
<feature type="helix" evidence="12">
    <location>
        <begin position="82"/>
        <end position="104"/>
    </location>
</feature>
<feature type="strand" evidence="12">
    <location>
        <begin position="106"/>
        <end position="108"/>
    </location>
</feature>
<feature type="helix" evidence="12">
    <location>
        <begin position="111"/>
        <end position="114"/>
    </location>
</feature>
<feature type="helix" evidence="12">
    <location>
        <begin position="116"/>
        <end position="127"/>
    </location>
</feature>
<feature type="helix" evidence="12">
    <location>
        <begin position="143"/>
        <end position="146"/>
    </location>
</feature>
<feature type="strand" evidence="12">
    <location>
        <begin position="148"/>
        <end position="152"/>
    </location>
</feature>
<feature type="helix" evidence="12">
    <location>
        <begin position="154"/>
        <end position="169"/>
    </location>
</feature>
<feature type="turn" evidence="12">
    <location>
        <begin position="170"/>
        <end position="174"/>
    </location>
</feature>
<feature type="strand" evidence="12">
    <location>
        <begin position="177"/>
        <end position="182"/>
    </location>
</feature>
<feature type="helix" evidence="12">
    <location>
        <begin position="184"/>
        <end position="202"/>
    </location>
</feature>
<feature type="helix" evidence="12">
    <location>
        <begin position="218"/>
        <end position="221"/>
    </location>
</feature>
<feature type="strand" evidence="12">
    <location>
        <begin position="222"/>
        <end position="224"/>
    </location>
</feature>
<feature type="helix" evidence="12">
    <location>
        <begin position="225"/>
        <end position="244"/>
    </location>
</feature>
<feature type="helix" evidence="12">
    <location>
        <begin position="256"/>
        <end position="270"/>
    </location>
</feature>
<feature type="turn" evidence="12">
    <location>
        <begin position="271"/>
        <end position="273"/>
    </location>
</feature>
<feature type="helix" evidence="12">
    <location>
        <begin position="282"/>
        <end position="293"/>
    </location>
</feature>
<feature type="helix" evidence="12">
    <location>
        <begin position="295"/>
        <end position="305"/>
    </location>
</feature>
<evidence type="ECO:0000250" key="1"/>
<evidence type="ECO:0000255" key="2"/>
<evidence type="ECO:0000269" key="3">
    <source>
    </source>
</evidence>
<evidence type="ECO:0000269" key="4">
    <source>
    </source>
</evidence>
<evidence type="ECO:0000269" key="5">
    <source>
    </source>
</evidence>
<evidence type="ECO:0000305" key="6"/>
<evidence type="ECO:0007744" key="7">
    <source>
    </source>
</evidence>
<evidence type="ECO:0007744" key="8">
    <source>
    </source>
</evidence>
<evidence type="ECO:0007744" key="9">
    <source>
    </source>
</evidence>
<evidence type="ECO:0007744" key="10">
    <source>
    </source>
</evidence>
<evidence type="ECO:0007744" key="11">
    <source>
    </source>
</evidence>
<evidence type="ECO:0007829" key="12">
    <source>
        <dbReference type="PDB" id="7CQ5"/>
    </source>
</evidence>
<dbReference type="EMBL" id="AF533891">
    <property type="protein sequence ID" value="AAO72749.1"/>
    <property type="molecule type" value="mRNA"/>
</dbReference>
<dbReference type="EMBL" id="AY358795">
    <property type="protein sequence ID" value="AAQ89155.1"/>
    <property type="molecule type" value="mRNA"/>
</dbReference>
<dbReference type="EMBL" id="AK075012">
    <property type="protein sequence ID" value="BAC11351.1"/>
    <property type="molecule type" value="mRNA"/>
</dbReference>
<dbReference type="EMBL" id="Z98200">
    <property type="status" value="NOT_ANNOTATED_CDS"/>
    <property type="molecule type" value="Genomic_DNA"/>
</dbReference>
<dbReference type="EMBL" id="CH471051">
    <property type="protein sequence ID" value="EAW48389.1"/>
    <property type="molecule type" value="Genomic_DNA"/>
</dbReference>
<dbReference type="EMBL" id="CH471051">
    <property type="protein sequence ID" value="EAW48390.1"/>
    <property type="molecule type" value="Genomic_DNA"/>
</dbReference>
<dbReference type="EMBL" id="BC068581">
    <property type="protein sequence ID" value="AAH68581.1"/>
    <property type="molecule type" value="mRNA"/>
</dbReference>
<dbReference type="EMBL" id="BK000461">
    <property type="protein sequence ID" value="DAA00039.1"/>
    <property type="molecule type" value="mRNA"/>
</dbReference>
<dbReference type="EMBL" id="AF077205">
    <property type="protein sequence ID" value="AAD27000.1"/>
    <property type="status" value="ALT_FRAME"/>
    <property type="molecule type" value="mRNA"/>
</dbReference>
<dbReference type="CCDS" id="CCDS5062.1"/>
<dbReference type="RefSeq" id="NP_054747.2">
    <property type="nucleotide sequence ID" value="NM_014028.3"/>
</dbReference>
<dbReference type="PDB" id="7BXU">
    <property type="method" value="EM"/>
    <property type="resolution" value="3.70 A"/>
    <property type="chains" value="C/D=1-334"/>
</dbReference>
<dbReference type="PDB" id="7CQ5">
    <property type="method" value="EM"/>
    <property type="resolution" value="2.60 A"/>
    <property type="chains" value="A/B=1-334"/>
</dbReference>
<dbReference type="PDB" id="7CQ6">
    <property type="method" value="EM"/>
    <property type="resolution" value="3.00 A"/>
    <property type="chains" value="A/B=1-334"/>
</dbReference>
<dbReference type="PDB" id="7CQ7">
    <property type="method" value="EM"/>
    <property type="resolution" value="3.55 A"/>
    <property type="chains" value="A/B=1-334"/>
</dbReference>
<dbReference type="PDB" id="7JM7">
    <property type="method" value="EM"/>
    <property type="resolution" value="2.82 A"/>
    <property type="chains" value="B/D=1-334"/>
</dbReference>
<dbReference type="PDB" id="8HVT">
    <property type="method" value="EM"/>
    <property type="resolution" value="3.60 A"/>
    <property type="chains" value="B/D=1-334"/>
</dbReference>
<dbReference type="PDBsum" id="7BXU"/>
<dbReference type="PDBsum" id="7CQ5"/>
<dbReference type="PDBsum" id="7CQ6"/>
<dbReference type="PDBsum" id="7CQ7"/>
<dbReference type="PDBsum" id="7JM7"/>
<dbReference type="PDBsum" id="8HVT"/>
<dbReference type="EMDB" id="EMD-22389"/>
<dbReference type="EMDB" id="EMD-30238"/>
<dbReference type="EMDB" id="EMD-30436"/>
<dbReference type="EMDB" id="EMD-30437"/>
<dbReference type="EMDB" id="EMD-30438"/>
<dbReference type="EMDB" id="EMD-35048"/>
<dbReference type="SMR" id="Q86WC4"/>
<dbReference type="BioGRID" id="118788">
    <property type="interactions" value="86"/>
</dbReference>
<dbReference type="ComplexPortal" id="CPX-6321">
    <property type="entry name" value="CLCN7-OSTM1 chloride channel complex"/>
</dbReference>
<dbReference type="FunCoup" id="Q86WC4">
    <property type="interactions" value="1194"/>
</dbReference>
<dbReference type="IntAct" id="Q86WC4">
    <property type="interactions" value="65"/>
</dbReference>
<dbReference type="MINT" id="Q86WC4"/>
<dbReference type="STRING" id="9606.ENSP00000193322"/>
<dbReference type="TCDB" id="2.A.49.3.3">
    <property type="family name" value="the chloride carrier/channel (clc) family"/>
</dbReference>
<dbReference type="GlyConnect" id="1589">
    <property type="glycosylation" value="5 N-Linked glycans (4 sites)"/>
</dbReference>
<dbReference type="GlyCosmos" id="Q86WC4">
    <property type="glycosylation" value="10 sites, 5 glycans"/>
</dbReference>
<dbReference type="GlyGen" id="Q86WC4">
    <property type="glycosylation" value="12 sites, 43 N-linked glycans (5 sites), 1 O-linked glycan (1 site)"/>
</dbReference>
<dbReference type="iPTMnet" id="Q86WC4"/>
<dbReference type="PhosphoSitePlus" id="Q86WC4"/>
<dbReference type="SwissPalm" id="Q86WC4"/>
<dbReference type="BioMuta" id="OSTM1"/>
<dbReference type="DMDM" id="51316434"/>
<dbReference type="jPOST" id="Q86WC4"/>
<dbReference type="MassIVE" id="Q86WC4"/>
<dbReference type="PaxDb" id="9606-ENSP00000193322"/>
<dbReference type="PeptideAtlas" id="Q86WC4"/>
<dbReference type="ProteomicsDB" id="70145"/>
<dbReference type="Pumba" id="Q86WC4"/>
<dbReference type="Antibodypedia" id="2255">
    <property type="antibodies" value="187 antibodies from 26 providers"/>
</dbReference>
<dbReference type="DNASU" id="28962"/>
<dbReference type="Ensembl" id="ENST00000193322.8">
    <property type="protein sequence ID" value="ENSP00000193322.3"/>
    <property type="gene ID" value="ENSG00000081087.16"/>
</dbReference>
<dbReference type="Ensembl" id="ENST00000492130.2">
    <property type="protein sequence ID" value="ENSP00000514453.1"/>
    <property type="gene ID" value="ENSG00000081087.16"/>
</dbReference>
<dbReference type="Ensembl" id="ENST00000699569.1">
    <property type="protein sequence ID" value="ENSP00000514443.1"/>
    <property type="gene ID" value="ENSG00000081087.16"/>
</dbReference>
<dbReference type="GeneID" id="28962"/>
<dbReference type="KEGG" id="hsa:28962"/>
<dbReference type="MANE-Select" id="ENST00000193322.8">
    <property type="protein sequence ID" value="ENSP00000193322.3"/>
    <property type="RefSeq nucleotide sequence ID" value="NM_014028.4"/>
    <property type="RefSeq protein sequence ID" value="NP_054747.2"/>
</dbReference>
<dbReference type="UCSC" id="uc003psd.3">
    <property type="organism name" value="human"/>
</dbReference>
<dbReference type="AGR" id="HGNC:21652"/>
<dbReference type="CTD" id="28962"/>
<dbReference type="DisGeNET" id="28962"/>
<dbReference type="GeneCards" id="OSTM1"/>
<dbReference type="HGNC" id="HGNC:21652">
    <property type="gene designation" value="OSTM1"/>
</dbReference>
<dbReference type="HPA" id="ENSG00000081087">
    <property type="expression patterns" value="Low tissue specificity"/>
</dbReference>
<dbReference type="MalaCards" id="OSTM1"/>
<dbReference type="MIM" id="259720">
    <property type="type" value="phenotype"/>
</dbReference>
<dbReference type="MIM" id="607649">
    <property type="type" value="gene"/>
</dbReference>
<dbReference type="neXtProt" id="NX_Q86WC4"/>
<dbReference type="OpenTargets" id="ENSG00000081087"/>
<dbReference type="Orphanet" id="85179">
    <property type="disease" value="Infantile osteopetrosis with neuroaxonal dysplasia"/>
</dbReference>
<dbReference type="PharmGKB" id="PA134941162"/>
<dbReference type="VEuPathDB" id="HostDB:ENSG00000081087"/>
<dbReference type="eggNOG" id="KOG4617">
    <property type="taxonomic scope" value="Eukaryota"/>
</dbReference>
<dbReference type="GeneTree" id="ENSGT00390000012341"/>
<dbReference type="HOGENOM" id="CLU_070677_0_0_1"/>
<dbReference type="InParanoid" id="Q86WC4"/>
<dbReference type="OMA" id="FQQVASK"/>
<dbReference type="OrthoDB" id="8021850at2759"/>
<dbReference type="PAN-GO" id="Q86WC4">
    <property type="GO annotations" value="2 GO annotations based on evolutionary models"/>
</dbReference>
<dbReference type="PhylomeDB" id="Q86WC4"/>
<dbReference type="TreeFam" id="TF323313"/>
<dbReference type="PathwayCommons" id="Q86WC4"/>
<dbReference type="Reactome" id="R-HSA-2672351">
    <property type="pathway name" value="Stimuli-sensing channels"/>
</dbReference>
<dbReference type="SignaLink" id="Q86WC4"/>
<dbReference type="BioGRID-ORCS" id="28962">
    <property type="hits" value="9 hits in 1191 CRISPR screens"/>
</dbReference>
<dbReference type="ChiTaRS" id="OSTM1">
    <property type="organism name" value="human"/>
</dbReference>
<dbReference type="GeneWiki" id="OSTM1"/>
<dbReference type="GenomeRNAi" id="28962"/>
<dbReference type="Pharos" id="Q86WC4">
    <property type="development level" value="Tbio"/>
</dbReference>
<dbReference type="PRO" id="PR:Q86WC4"/>
<dbReference type="Proteomes" id="UP000005640">
    <property type="component" value="Chromosome 6"/>
</dbReference>
<dbReference type="RNAct" id="Q86WC4">
    <property type="molecule type" value="protein"/>
</dbReference>
<dbReference type="Bgee" id="ENSG00000081087">
    <property type="expression patterns" value="Expressed in choroid plexus epithelium and 199 other cell types or tissues"/>
</dbReference>
<dbReference type="ExpressionAtlas" id="Q86WC4">
    <property type="expression patterns" value="baseline and differential"/>
</dbReference>
<dbReference type="GO" id="GO:0034707">
    <property type="term" value="C:chloride channel complex"/>
    <property type="evidence" value="ECO:0000353"/>
    <property type="project" value="ComplexPortal"/>
</dbReference>
<dbReference type="GO" id="GO:0005829">
    <property type="term" value="C:cytosol"/>
    <property type="evidence" value="ECO:0000318"/>
    <property type="project" value="GO_Central"/>
</dbReference>
<dbReference type="GO" id="GO:0005765">
    <property type="term" value="C:lysosomal membrane"/>
    <property type="evidence" value="ECO:0000314"/>
    <property type="project" value="ComplexPortal"/>
</dbReference>
<dbReference type="GO" id="GO:0030316">
    <property type="term" value="P:osteoclast differentiation"/>
    <property type="evidence" value="ECO:0000318"/>
    <property type="project" value="GO_Central"/>
</dbReference>
<dbReference type="GO" id="GO:0030321">
    <property type="term" value="P:transepithelial chloride transport"/>
    <property type="evidence" value="ECO:0000314"/>
    <property type="project" value="ComplexPortal"/>
</dbReference>
<dbReference type="InterPro" id="IPR019172">
    <property type="entry name" value="Osteopetrosis-assoc_TM_1"/>
</dbReference>
<dbReference type="PANTHER" id="PTHR15644">
    <property type="entry name" value="OSTEOPETROSIS ASSOCIATED TRANSMEMBRANE PROTEIN 1"/>
    <property type="match status" value="1"/>
</dbReference>
<dbReference type="PANTHER" id="PTHR15644:SF2">
    <property type="entry name" value="OSTEOPETROSIS-ASSOCIATED TRANSMEMBRANE PROTEIN 1"/>
    <property type="match status" value="1"/>
</dbReference>
<dbReference type="Pfam" id="PF09777">
    <property type="entry name" value="OSTMP1"/>
    <property type="match status" value="1"/>
</dbReference>
<gene>
    <name type="primary">OSTM1</name>
    <name type="synonym">GL</name>
    <name type="ORF">HSPC019</name>
    <name type="ORF">UNQ6098/PRO21201</name>
</gene>
<reference key="1">
    <citation type="journal article" date="2003" name="Nat. Med.">
        <title>Grey-lethal mutation induces severe malignant autosomal recessive osteopetrosis in mouse and human.</title>
        <authorList>
            <person name="Chalhoub N."/>
            <person name="Benachenhou N."/>
            <person name="Rajapurohitam V."/>
            <person name="Pata M."/>
            <person name="Ferron M."/>
            <person name="Frattini A."/>
            <person name="Villa A."/>
            <person name="Vacher J."/>
        </authorList>
    </citation>
    <scope>NUCLEOTIDE SEQUENCE [MRNA]</scope>
    <scope>INVOLVEMENT IN OPTB5</scope>
</reference>
<reference key="2">
    <citation type="journal article" date="2003" name="Genome Res.">
        <title>The secreted protein discovery initiative (SPDI), a large-scale effort to identify novel human secreted and transmembrane proteins: a bioinformatics assessment.</title>
        <authorList>
            <person name="Clark H.F."/>
            <person name="Gurney A.L."/>
            <person name="Abaya E."/>
            <person name="Baker K."/>
            <person name="Baldwin D.T."/>
            <person name="Brush J."/>
            <person name="Chen J."/>
            <person name="Chow B."/>
            <person name="Chui C."/>
            <person name="Crowley C."/>
            <person name="Currell B."/>
            <person name="Deuel B."/>
            <person name="Dowd P."/>
            <person name="Eaton D."/>
            <person name="Foster J.S."/>
            <person name="Grimaldi C."/>
            <person name="Gu Q."/>
            <person name="Hass P.E."/>
            <person name="Heldens S."/>
            <person name="Huang A."/>
            <person name="Kim H.S."/>
            <person name="Klimowski L."/>
            <person name="Jin Y."/>
            <person name="Johnson S."/>
            <person name="Lee J."/>
            <person name="Lewis L."/>
            <person name="Liao D."/>
            <person name="Mark M.R."/>
            <person name="Robbie E."/>
            <person name="Sanchez C."/>
            <person name="Schoenfeld J."/>
            <person name="Seshagiri S."/>
            <person name="Simmons L."/>
            <person name="Singh J."/>
            <person name="Smith V."/>
            <person name="Stinson J."/>
            <person name="Vagts A."/>
            <person name="Vandlen R.L."/>
            <person name="Watanabe C."/>
            <person name="Wieand D."/>
            <person name="Woods K."/>
            <person name="Xie M.-H."/>
            <person name="Yansura D.G."/>
            <person name="Yi S."/>
            <person name="Yu G."/>
            <person name="Yuan J."/>
            <person name="Zhang M."/>
            <person name="Zhang Z."/>
            <person name="Goddard A.D."/>
            <person name="Wood W.I."/>
            <person name="Godowski P.J."/>
            <person name="Gray A.M."/>
        </authorList>
    </citation>
    <scope>NUCLEOTIDE SEQUENCE [LARGE SCALE MRNA]</scope>
</reference>
<reference key="3">
    <citation type="journal article" date="2004" name="Nat. Genet.">
        <title>Complete sequencing and characterization of 21,243 full-length human cDNAs.</title>
        <authorList>
            <person name="Ota T."/>
            <person name="Suzuki Y."/>
            <person name="Nishikawa T."/>
            <person name="Otsuki T."/>
            <person name="Sugiyama T."/>
            <person name="Irie R."/>
            <person name="Wakamatsu A."/>
            <person name="Hayashi K."/>
            <person name="Sato H."/>
            <person name="Nagai K."/>
            <person name="Kimura K."/>
            <person name="Makita H."/>
            <person name="Sekine M."/>
            <person name="Obayashi M."/>
            <person name="Nishi T."/>
            <person name="Shibahara T."/>
            <person name="Tanaka T."/>
            <person name="Ishii S."/>
            <person name="Yamamoto J."/>
            <person name="Saito K."/>
            <person name="Kawai Y."/>
            <person name="Isono Y."/>
            <person name="Nakamura Y."/>
            <person name="Nagahari K."/>
            <person name="Murakami K."/>
            <person name="Yasuda T."/>
            <person name="Iwayanagi T."/>
            <person name="Wagatsuma M."/>
            <person name="Shiratori A."/>
            <person name="Sudo H."/>
            <person name="Hosoiri T."/>
            <person name="Kaku Y."/>
            <person name="Kodaira H."/>
            <person name="Kondo H."/>
            <person name="Sugawara M."/>
            <person name="Takahashi M."/>
            <person name="Kanda K."/>
            <person name="Yokoi T."/>
            <person name="Furuya T."/>
            <person name="Kikkawa E."/>
            <person name="Omura Y."/>
            <person name="Abe K."/>
            <person name="Kamihara K."/>
            <person name="Katsuta N."/>
            <person name="Sato K."/>
            <person name="Tanikawa M."/>
            <person name="Yamazaki M."/>
            <person name="Ninomiya K."/>
            <person name="Ishibashi T."/>
            <person name="Yamashita H."/>
            <person name="Murakawa K."/>
            <person name="Fujimori K."/>
            <person name="Tanai H."/>
            <person name="Kimata M."/>
            <person name="Watanabe M."/>
            <person name="Hiraoka S."/>
            <person name="Chiba Y."/>
            <person name="Ishida S."/>
            <person name="Ono Y."/>
            <person name="Takiguchi S."/>
            <person name="Watanabe S."/>
            <person name="Yosida M."/>
            <person name="Hotuta T."/>
            <person name="Kusano J."/>
            <person name="Kanehori K."/>
            <person name="Takahashi-Fujii A."/>
            <person name="Hara H."/>
            <person name="Tanase T.-O."/>
            <person name="Nomura Y."/>
            <person name="Togiya S."/>
            <person name="Komai F."/>
            <person name="Hara R."/>
            <person name="Takeuchi K."/>
            <person name="Arita M."/>
            <person name="Imose N."/>
            <person name="Musashino K."/>
            <person name="Yuuki H."/>
            <person name="Oshima A."/>
            <person name="Sasaki N."/>
            <person name="Aotsuka S."/>
            <person name="Yoshikawa Y."/>
            <person name="Matsunawa H."/>
            <person name="Ichihara T."/>
            <person name="Shiohata N."/>
            <person name="Sano S."/>
            <person name="Moriya S."/>
            <person name="Momiyama H."/>
            <person name="Satoh N."/>
            <person name="Takami S."/>
            <person name="Terashima Y."/>
            <person name="Suzuki O."/>
            <person name="Nakagawa S."/>
            <person name="Senoh A."/>
            <person name="Mizoguchi H."/>
            <person name="Goto Y."/>
            <person name="Shimizu F."/>
            <person name="Wakebe H."/>
            <person name="Hishigaki H."/>
            <person name="Watanabe T."/>
            <person name="Sugiyama A."/>
            <person name="Takemoto M."/>
            <person name="Kawakami B."/>
            <person name="Yamazaki M."/>
            <person name="Watanabe K."/>
            <person name="Kumagai A."/>
            <person name="Itakura S."/>
            <person name="Fukuzumi Y."/>
            <person name="Fujimori Y."/>
            <person name="Komiyama M."/>
            <person name="Tashiro H."/>
            <person name="Tanigami A."/>
            <person name="Fujiwara T."/>
            <person name="Ono T."/>
            <person name="Yamada K."/>
            <person name="Fujii Y."/>
            <person name="Ozaki K."/>
            <person name="Hirao M."/>
            <person name="Ohmori Y."/>
            <person name="Kawabata A."/>
            <person name="Hikiji T."/>
            <person name="Kobatake N."/>
            <person name="Inagaki H."/>
            <person name="Ikema Y."/>
            <person name="Okamoto S."/>
            <person name="Okitani R."/>
            <person name="Kawakami T."/>
            <person name="Noguchi S."/>
            <person name="Itoh T."/>
            <person name="Shigeta K."/>
            <person name="Senba T."/>
            <person name="Matsumura K."/>
            <person name="Nakajima Y."/>
            <person name="Mizuno T."/>
            <person name="Morinaga M."/>
            <person name="Sasaki M."/>
            <person name="Togashi T."/>
            <person name="Oyama M."/>
            <person name="Hata H."/>
            <person name="Watanabe M."/>
            <person name="Komatsu T."/>
            <person name="Mizushima-Sugano J."/>
            <person name="Satoh T."/>
            <person name="Shirai Y."/>
            <person name="Takahashi Y."/>
            <person name="Nakagawa K."/>
            <person name="Okumura K."/>
            <person name="Nagase T."/>
            <person name="Nomura N."/>
            <person name="Kikuchi H."/>
            <person name="Masuho Y."/>
            <person name="Yamashita R."/>
            <person name="Nakai K."/>
            <person name="Yada T."/>
            <person name="Nakamura Y."/>
            <person name="Ohara O."/>
            <person name="Isogai T."/>
            <person name="Sugano S."/>
        </authorList>
    </citation>
    <scope>NUCLEOTIDE SEQUENCE [LARGE SCALE MRNA]</scope>
</reference>
<reference key="4">
    <citation type="journal article" date="2003" name="Nature">
        <title>The DNA sequence and analysis of human chromosome 6.</title>
        <authorList>
            <person name="Mungall A.J."/>
            <person name="Palmer S.A."/>
            <person name="Sims S.K."/>
            <person name="Edwards C.A."/>
            <person name="Ashurst J.L."/>
            <person name="Wilming L."/>
            <person name="Jones M.C."/>
            <person name="Horton R."/>
            <person name="Hunt S.E."/>
            <person name="Scott C.E."/>
            <person name="Gilbert J.G.R."/>
            <person name="Clamp M.E."/>
            <person name="Bethel G."/>
            <person name="Milne S."/>
            <person name="Ainscough R."/>
            <person name="Almeida J.P."/>
            <person name="Ambrose K.D."/>
            <person name="Andrews T.D."/>
            <person name="Ashwell R.I.S."/>
            <person name="Babbage A.K."/>
            <person name="Bagguley C.L."/>
            <person name="Bailey J."/>
            <person name="Banerjee R."/>
            <person name="Barker D.J."/>
            <person name="Barlow K.F."/>
            <person name="Bates K."/>
            <person name="Beare D.M."/>
            <person name="Beasley H."/>
            <person name="Beasley O."/>
            <person name="Bird C.P."/>
            <person name="Blakey S.E."/>
            <person name="Bray-Allen S."/>
            <person name="Brook J."/>
            <person name="Brown A.J."/>
            <person name="Brown J.Y."/>
            <person name="Burford D.C."/>
            <person name="Burrill W."/>
            <person name="Burton J."/>
            <person name="Carder C."/>
            <person name="Carter N.P."/>
            <person name="Chapman J.C."/>
            <person name="Clark S.Y."/>
            <person name="Clark G."/>
            <person name="Clee C.M."/>
            <person name="Clegg S."/>
            <person name="Cobley V."/>
            <person name="Collier R.E."/>
            <person name="Collins J.E."/>
            <person name="Colman L.K."/>
            <person name="Corby N.R."/>
            <person name="Coville G.J."/>
            <person name="Culley K.M."/>
            <person name="Dhami P."/>
            <person name="Davies J."/>
            <person name="Dunn M."/>
            <person name="Earthrowl M.E."/>
            <person name="Ellington A.E."/>
            <person name="Evans K.A."/>
            <person name="Faulkner L."/>
            <person name="Francis M.D."/>
            <person name="Frankish A."/>
            <person name="Frankland J."/>
            <person name="French L."/>
            <person name="Garner P."/>
            <person name="Garnett J."/>
            <person name="Ghori M.J."/>
            <person name="Gilby L.M."/>
            <person name="Gillson C.J."/>
            <person name="Glithero R.J."/>
            <person name="Grafham D.V."/>
            <person name="Grant M."/>
            <person name="Gribble S."/>
            <person name="Griffiths C."/>
            <person name="Griffiths M.N.D."/>
            <person name="Hall R."/>
            <person name="Halls K.S."/>
            <person name="Hammond S."/>
            <person name="Harley J.L."/>
            <person name="Hart E.A."/>
            <person name="Heath P.D."/>
            <person name="Heathcott R."/>
            <person name="Holmes S.J."/>
            <person name="Howden P.J."/>
            <person name="Howe K.L."/>
            <person name="Howell G.R."/>
            <person name="Huckle E."/>
            <person name="Humphray S.J."/>
            <person name="Humphries M.D."/>
            <person name="Hunt A.R."/>
            <person name="Johnson C.M."/>
            <person name="Joy A.A."/>
            <person name="Kay M."/>
            <person name="Keenan S.J."/>
            <person name="Kimberley A.M."/>
            <person name="King A."/>
            <person name="Laird G.K."/>
            <person name="Langford C."/>
            <person name="Lawlor S."/>
            <person name="Leongamornlert D.A."/>
            <person name="Leversha M."/>
            <person name="Lloyd C.R."/>
            <person name="Lloyd D.M."/>
            <person name="Loveland J.E."/>
            <person name="Lovell J."/>
            <person name="Martin S."/>
            <person name="Mashreghi-Mohammadi M."/>
            <person name="Maslen G.L."/>
            <person name="Matthews L."/>
            <person name="McCann O.T."/>
            <person name="McLaren S.J."/>
            <person name="McLay K."/>
            <person name="McMurray A."/>
            <person name="Moore M.J.F."/>
            <person name="Mullikin J.C."/>
            <person name="Niblett D."/>
            <person name="Nickerson T."/>
            <person name="Novik K.L."/>
            <person name="Oliver K."/>
            <person name="Overton-Larty E.K."/>
            <person name="Parker A."/>
            <person name="Patel R."/>
            <person name="Pearce A.V."/>
            <person name="Peck A.I."/>
            <person name="Phillimore B.J.C.T."/>
            <person name="Phillips S."/>
            <person name="Plumb R.W."/>
            <person name="Porter K.M."/>
            <person name="Ramsey Y."/>
            <person name="Ranby S.A."/>
            <person name="Rice C.M."/>
            <person name="Ross M.T."/>
            <person name="Searle S.M."/>
            <person name="Sehra H.K."/>
            <person name="Sheridan E."/>
            <person name="Skuce C.D."/>
            <person name="Smith S."/>
            <person name="Smith M."/>
            <person name="Spraggon L."/>
            <person name="Squares S.L."/>
            <person name="Steward C.A."/>
            <person name="Sycamore N."/>
            <person name="Tamlyn-Hall G."/>
            <person name="Tester J."/>
            <person name="Theaker A.J."/>
            <person name="Thomas D.W."/>
            <person name="Thorpe A."/>
            <person name="Tracey A."/>
            <person name="Tromans A."/>
            <person name="Tubby B."/>
            <person name="Wall M."/>
            <person name="Wallis J.M."/>
            <person name="West A.P."/>
            <person name="White S.S."/>
            <person name="Whitehead S.L."/>
            <person name="Whittaker H."/>
            <person name="Wild A."/>
            <person name="Willey D.J."/>
            <person name="Wilmer T.E."/>
            <person name="Wood J.M."/>
            <person name="Wray P.W."/>
            <person name="Wyatt J.C."/>
            <person name="Young L."/>
            <person name="Younger R.M."/>
            <person name="Bentley D.R."/>
            <person name="Coulson A."/>
            <person name="Durbin R.M."/>
            <person name="Hubbard T."/>
            <person name="Sulston J.E."/>
            <person name="Dunham I."/>
            <person name="Rogers J."/>
            <person name="Beck S."/>
        </authorList>
    </citation>
    <scope>NUCLEOTIDE SEQUENCE [LARGE SCALE GENOMIC DNA]</scope>
</reference>
<reference key="5">
    <citation type="submission" date="2005-09" db="EMBL/GenBank/DDBJ databases">
        <authorList>
            <person name="Mural R.J."/>
            <person name="Istrail S."/>
            <person name="Sutton G.G."/>
            <person name="Florea L."/>
            <person name="Halpern A.L."/>
            <person name="Mobarry C.M."/>
            <person name="Lippert R."/>
            <person name="Walenz B."/>
            <person name="Shatkay H."/>
            <person name="Dew I."/>
            <person name="Miller J.R."/>
            <person name="Flanigan M.J."/>
            <person name="Edwards N.J."/>
            <person name="Bolanos R."/>
            <person name="Fasulo D."/>
            <person name="Halldorsson B.V."/>
            <person name="Hannenhalli S."/>
            <person name="Turner R."/>
            <person name="Yooseph S."/>
            <person name="Lu F."/>
            <person name="Nusskern D.R."/>
            <person name="Shue B.C."/>
            <person name="Zheng X.H."/>
            <person name="Zhong F."/>
            <person name="Delcher A.L."/>
            <person name="Huson D.H."/>
            <person name="Kravitz S.A."/>
            <person name="Mouchard L."/>
            <person name="Reinert K."/>
            <person name="Remington K.A."/>
            <person name="Clark A.G."/>
            <person name="Waterman M.S."/>
            <person name="Eichler E.E."/>
            <person name="Adams M.D."/>
            <person name="Hunkapiller M.W."/>
            <person name="Myers E.W."/>
            <person name="Venter J.C."/>
        </authorList>
    </citation>
    <scope>NUCLEOTIDE SEQUENCE [LARGE SCALE GENOMIC DNA]</scope>
</reference>
<reference key="6">
    <citation type="journal article" date="2004" name="Genome Res.">
        <title>The status, quality, and expansion of the NIH full-length cDNA project: the Mammalian Gene Collection (MGC).</title>
        <authorList>
            <consortium name="The MGC Project Team"/>
        </authorList>
    </citation>
    <scope>NUCLEOTIDE SEQUENCE [LARGE SCALE MRNA]</scope>
    <source>
        <tissue>Testis</tissue>
    </source>
</reference>
<reference key="7">
    <citation type="journal article" date="2002" name="Genomics">
        <title>Novel vertebrate genes and putative regulatory elements identified at kidney disease and NR2E1/fierce loci.</title>
        <authorList>
            <person name="Abrahams B.S."/>
            <person name="Mak G.M."/>
            <person name="Berry M.L."/>
            <person name="Palmquist D.L."/>
            <person name="Saionz J.R."/>
            <person name="Tay A."/>
            <person name="Tan Y.H."/>
            <person name="Brenner S."/>
            <person name="Simpson E.M."/>
            <person name="Venkatesh B."/>
        </authorList>
    </citation>
    <scope>NUCLEOTIDE SEQUENCE [MRNA] OF 19-334</scope>
</reference>
<reference key="8">
    <citation type="journal article" date="2000" name="Genome Res.">
        <title>Cloning and functional analysis of cDNAs with open reading frames for 300 previously undefined genes expressed in CD34+ hematopoietic stem/progenitor cells.</title>
        <authorList>
            <person name="Zhang Q.-H."/>
            <person name="Ye M."/>
            <person name="Wu X.-Y."/>
            <person name="Ren S.-X."/>
            <person name="Zhao M."/>
            <person name="Zhao C.-J."/>
            <person name="Fu G."/>
            <person name="Shen Y."/>
            <person name="Fan H.-Y."/>
            <person name="Lu G."/>
            <person name="Zhong M."/>
            <person name="Xu X.-R."/>
            <person name="Han Z.-G."/>
            <person name="Zhang J.-W."/>
            <person name="Tao J."/>
            <person name="Huang Q.-H."/>
            <person name="Zhou J."/>
            <person name="Hu G.-X."/>
            <person name="Gu J."/>
            <person name="Chen S.-J."/>
            <person name="Chen Z."/>
        </authorList>
    </citation>
    <scope>NUCLEOTIDE SEQUENCE [LARGE SCALE MRNA] OF 189-334</scope>
    <source>
        <tissue>Umbilical cord blood</tissue>
    </source>
</reference>
<reference key="9">
    <citation type="journal article" date="2006" name="Cell">
        <title>Global, in vivo, and site-specific phosphorylation dynamics in signaling networks.</title>
        <authorList>
            <person name="Olsen J.V."/>
            <person name="Blagoev B."/>
            <person name="Gnad F."/>
            <person name="Macek B."/>
            <person name="Kumar C."/>
            <person name="Mortensen P."/>
            <person name="Mann M."/>
        </authorList>
    </citation>
    <scope>IDENTIFICATION BY MASS SPECTROMETRY [LARGE SCALE ANALYSIS]</scope>
    <source>
        <tissue>Cervix carcinoma</tissue>
    </source>
</reference>
<reference key="10">
    <citation type="journal article" date="2006" name="J. Bone Miner. Res.">
        <title>Mutations in OSTM1 (grey lethal) define a particularly severe form of autosomal recessive osteopetrosis with neural involvement.</title>
        <authorList>
            <person name="Pangrazio A."/>
            <person name="Poliani P.L."/>
            <person name="Megarbane A."/>
            <person name="Lefranc G."/>
            <person name="Lanino E."/>
            <person name="Di Rocco M."/>
            <person name="Rucci F."/>
            <person name="Lucchini F."/>
            <person name="Ravanini M."/>
            <person name="Facchetti F."/>
            <person name="Abinun M."/>
            <person name="Vezzoni P."/>
            <person name="Villa A."/>
            <person name="Frattini A."/>
        </authorList>
    </citation>
    <scope>INVOLVEMENT IN OPTB5</scope>
</reference>
<reference key="11">
    <citation type="journal article" date="2008" name="Proc. Natl. Acad. Sci. U.S.A.">
        <title>A quantitative atlas of mitotic phosphorylation.</title>
        <authorList>
            <person name="Dephoure N."/>
            <person name="Zhou C."/>
            <person name="Villen J."/>
            <person name="Beausoleil S.A."/>
            <person name="Bakalarski C.E."/>
            <person name="Elledge S.J."/>
            <person name="Gygi S.P."/>
        </authorList>
    </citation>
    <scope>PHOSPHORYLATION [LARGE SCALE ANALYSIS] AT SER-322; SER-325 AND SER-333</scope>
    <scope>IDENTIFICATION BY MASS SPECTROMETRY [LARGE SCALE ANALYSIS]</scope>
    <source>
        <tissue>Cervix carcinoma</tissue>
    </source>
</reference>
<reference key="12">
    <citation type="journal article" date="2009" name="Anal. Chem.">
        <title>Lys-N and trypsin cover complementary parts of the phosphoproteome in a refined SCX-based approach.</title>
        <authorList>
            <person name="Gauci S."/>
            <person name="Helbig A.O."/>
            <person name="Slijper M."/>
            <person name="Krijgsveld J."/>
            <person name="Heck A.J."/>
            <person name="Mohammed S."/>
        </authorList>
    </citation>
    <scope>IDENTIFICATION BY MASS SPECTROMETRY [LARGE SCALE ANALYSIS]</scope>
</reference>
<reference key="13">
    <citation type="journal article" date="2009" name="Sci. Signal.">
        <title>Quantitative phosphoproteomic analysis of T cell receptor signaling reveals system-wide modulation of protein-protein interactions.</title>
        <authorList>
            <person name="Mayya V."/>
            <person name="Lundgren D.H."/>
            <person name="Hwang S.-I."/>
            <person name="Rezaul K."/>
            <person name="Wu L."/>
            <person name="Eng J.K."/>
            <person name="Rodionov V."/>
            <person name="Han D.K."/>
        </authorList>
    </citation>
    <scope>PHOSPHORYLATION [LARGE SCALE ANALYSIS] AT SER-322 AND SER-325</scope>
    <scope>IDENTIFICATION BY MASS SPECTROMETRY [LARGE SCALE ANALYSIS]</scope>
    <source>
        <tissue>Leukemic T-cell</tissue>
    </source>
</reference>
<reference key="14">
    <citation type="journal article" date="2010" name="Sci. Signal.">
        <title>Quantitative phosphoproteomics reveals widespread full phosphorylation site occupancy during mitosis.</title>
        <authorList>
            <person name="Olsen J.V."/>
            <person name="Vermeulen M."/>
            <person name="Santamaria A."/>
            <person name="Kumar C."/>
            <person name="Miller M.L."/>
            <person name="Jensen L.J."/>
            <person name="Gnad F."/>
            <person name="Cox J."/>
            <person name="Jensen T.S."/>
            <person name="Nigg E.A."/>
            <person name="Brunak S."/>
            <person name="Mann M."/>
        </authorList>
    </citation>
    <scope>PHOSPHORYLATION [LARGE SCALE ANALYSIS] AT SER-333</scope>
    <scope>IDENTIFICATION BY MASS SPECTROMETRY [LARGE SCALE ANALYSIS]</scope>
    <source>
        <tissue>Cervix carcinoma</tissue>
    </source>
</reference>
<reference key="15">
    <citation type="journal article" date="2011" name="EMBO J.">
        <title>ClC-7 is a slowly voltage-gated 2Cl(-)/1H(+)-exchanger and requires Ostm1 for transport activity.</title>
        <authorList>
            <person name="Leisle L."/>
            <person name="Ludwig C.F."/>
            <person name="Wagner F.A."/>
            <person name="Jentsch T.J."/>
            <person name="Stauber T."/>
        </authorList>
    </citation>
    <scope>FUNCTION</scope>
    <scope>SUBUNIT</scope>
    <scope>INTERACTION WITH CLCN7</scope>
    <scope>SUBCELLULAR LOCATION</scope>
</reference>
<reference key="16">
    <citation type="journal article" date="2011" name="Sci. Signal.">
        <title>System-wide temporal characterization of the proteome and phosphoproteome of human embryonic stem cell differentiation.</title>
        <authorList>
            <person name="Rigbolt K.T."/>
            <person name="Prokhorova T.A."/>
            <person name="Akimov V."/>
            <person name="Henningsen J."/>
            <person name="Johansen P.T."/>
            <person name="Kratchmarova I."/>
            <person name="Kassem M."/>
            <person name="Mann M."/>
            <person name="Olsen J.V."/>
            <person name="Blagoev B."/>
        </authorList>
    </citation>
    <scope>IDENTIFICATION BY MASS SPECTROMETRY [LARGE SCALE ANALYSIS]</scope>
</reference>
<reference key="17">
    <citation type="journal article" date="2013" name="J. Proteome Res.">
        <title>Toward a comprehensive characterization of a human cancer cell phosphoproteome.</title>
        <authorList>
            <person name="Zhou H."/>
            <person name="Di Palma S."/>
            <person name="Preisinger C."/>
            <person name="Peng M."/>
            <person name="Polat A.N."/>
            <person name="Heck A.J."/>
            <person name="Mohammed S."/>
        </authorList>
    </citation>
    <scope>PHOSPHORYLATION [LARGE SCALE ANALYSIS] AT SER-322 AND SER-325</scope>
    <scope>IDENTIFICATION BY MASS SPECTROMETRY [LARGE SCALE ANALYSIS]</scope>
    <source>
        <tissue>Cervix carcinoma</tissue>
        <tissue>Erythroleukemia</tissue>
    </source>
</reference>
<reference key="18">
    <citation type="journal article" date="2014" name="J. Proteomics">
        <title>An enzyme assisted RP-RPLC approach for in-depth analysis of human liver phosphoproteome.</title>
        <authorList>
            <person name="Bian Y."/>
            <person name="Song C."/>
            <person name="Cheng K."/>
            <person name="Dong M."/>
            <person name="Wang F."/>
            <person name="Huang J."/>
            <person name="Sun D."/>
            <person name="Wang L."/>
            <person name="Ye M."/>
            <person name="Zou H."/>
        </authorList>
    </citation>
    <scope>PHOSPHORYLATION [LARGE SCALE ANALYSIS] AT SER-325</scope>
    <scope>IDENTIFICATION BY MASS SPECTROMETRY [LARGE SCALE ANALYSIS]</scope>
    <source>
        <tissue>Liver</tissue>
    </source>
</reference>
<proteinExistence type="evidence at protein level"/>
<protein>
    <recommendedName>
        <fullName>Osteopetrosis-associated transmembrane protein 1</fullName>
    </recommendedName>
    <alternativeName>
        <fullName>Chloride channel 7 beta subunit</fullName>
    </alternativeName>
</protein>
<accession>Q86WC4</accession>
<accession>E1P5E3</accession>
<accession>Q5R391</accession>
<accession>Q6PCA7</accession>
<accession>Q7RTW6</accession>
<accession>Q8NC29</accession>
<accession>Q8TC82</accession>
<accession>Q9Y2S9</accession>
<keyword id="KW-0002">3D-structure</keyword>
<keyword id="KW-0325">Glycoprotein</keyword>
<keyword id="KW-0458">Lysosome</keyword>
<keyword id="KW-0472">Membrane</keyword>
<keyword id="KW-0987">Osteopetrosis</keyword>
<keyword id="KW-0597">Phosphoprotein</keyword>
<keyword id="KW-1267">Proteomics identification</keyword>
<keyword id="KW-1185">Reference proteome</keyword>
<keyword id="KW-0732">Signal</keyword>
<keyword id="KW-0812">Transmembrane</keyword>
<keyword id="KW-1133">Transmembrane helix</keyword>
<sequence length="334" mass="37257">MEPGPTAAQRRCSLPPWLPLGLLLWSGLALGALPFGSSPHRVFHDLLSEQQLLEVEDLSLSLLQGGGLGPLSLPPDLPDLDPECRELLLDFANSSAELTGCLVRSARPVRLCQTCYPLFQQVVSKMDNISRAAGNTSESQSCARSLLMADRMQIVVILSEFFNTTWQEANCANCLTNNSEELSNSTVYFLNLFNHTLTCFEHNLQGNAHSLLQTKNYSEVCKNCREAYKTLSSLYSEMQKMNELENKAEPGTHLCIDVEDAMNITRKLWSRTFNCSVPCSDTVPVIAVSVFILFLPVVFYLSSFLHSEQKKRKLILPKRLKSSTSFANIQENSN</sequence>
<name>OSTM1_HUMAN</name>